<gene>
    <name evidence="1" type="primary">E2</name>
</gene>
<reference key="1">
    <citation type="journal article" date="1994" name="Curr. Top. Microbiol. Immunol.">
        <title>Primer-directed sequencing of human papillomavirus types.</title>
        <authorList>
            <person name="Delius H."/>
            <person name="Hofmann B."/>
        </authorList>
    </citation>
    <scope>NUCLEOTIDE SEQUENCE [GENOMIC DNA]</scope>
</reference>
<keyword id="KW-0010">Activator</keyword>
<keyword id="KW-0235">DNA replication</keyword>
<keyword id="KW-0238">DNA-binding</keyword>
<keyword id="KW-0244">Early protein</keyword>
<keyword id="KW-1048">Host nucleus</keyword>
<keyword id="KW-0597">Phosphoprotein</keyword>
<keyword id="KW-1185">Reference proteome</keyword>
<keyword id="KW-0678">Repressor</keyword>
<keyword id="KW-0804">Transcription</keyword>
<keyword id="KW-0805">Transcription regulation</keyword>
<sequence length="375" mass="42695">MEKLARRLDLCQEQLLELYEQDSKQLQHHILHWKYIRYESVIYYTARQMGIKRLGHQVVPSLDVSKAKAHAAIEMQMCLESLQTTEYNLEPWTLQDTSQELWLAEPKKCFKKGGKTVEVRFDCNEHNAMHYTLWTAVYVQVEDTWTKVEGQVDHRGLFYTVHGCTTYYVDFGKEAHTYGKTNDWTVIVGSRVICSPSTVEGLPIVAPVDIRHPAATDATDATKVHDAPYALPASTTKVYNDSHAPPRKRRRDGDLSISAVDGCSGRKYVDTGNRARSPDIESNNKIRNSGGGHSTPIIQLEGDANCLKCFRYRLTKVSHLYTNSSTTWRWTTESRTNKNAIITLTYSSVHQRSQFLALVKIPKTIKHSLGMLTIM</sequence>
<comment type="function">
    <text evidence="1">Plays a role in the initiation of viral DNA replication. A dimer of E2 interacts with a dimer of E1 in order to improve specificity of E1 DNA binding activity. Once the complex recognizes and binds DNA at specific sites, the E2 dimer is removed from DNA. E2 also regulates viral transcription through binding to the E2RE response element (5'-ACCNNNNNNGGT-3') present in multiple copies in the regulatory regions of the viral genome. Activates or represses transcription depending on E2RE's position with regards to proximal promoter elements including the TATA-box. Repression occurs by sterically hindering the assembly of the transcription initiation complex.</text>
</comment>
<comment type="subunit">
    <text evidence="1">Binds DNA as homodimer. Interacts with protein E1; this interaction greatly increases E1 DNA-binding activity. Interacts with protein L1; this interaction enhances E2-dependent replication and transcription activation. Interacts with protein L2; this interaction inhibits E2 transcriptional activity but not DNA replication function E2. Interacts with protein E7; this interaction inhibits E7 oncogenic activity. Interacts with host TAF1; this interaction modulates E2-dependent transcriptional regulation. Interacts with host BRD4; this interaction mediates E2 transcriptional activation function. Additionally, the interaction with host BRD4 on mitotic chromosomes mediates tethering of the viral genome. Interacts with host TOPBP1; this interaction is required for optimal viral DNA replication.</text>
</comment>
<comment type="subcellular location">
    <subcellularLocation>
        <location evidence="1">Host nucleus</location>
    </subcellularLocation>
</comment>
<comment type="PTM">
    <text evidence="1">Phosphorylated.</text>
</comment>
<comment type="similarity">
    <text evidence="1">Belongs to the papillomaviridae E2 protein family.</text>
</comment>
<organismHost>
    <name type="scientific">Homo sapiens</name>
    <name type="common">Human</name>
    <dbReference type="NCBI Taxonomy" id="9606"/>
</organismHost>
<organism>
    <name type="scientific">Human papillomavirus 7</name>
    <dbReference type="NCBI Taxonomy" id="10620"/>
    <lineage>
        <taxon>Viruses</taxon>
        <taxon>Monodnaviria</taxon>
        <taxon>Shotokuvirae</taxon>
        <taxon>Cossaviricota</taxon>
        <taxon>Papovaviricetes</taxon>
        <taxon>Zurhausenvirales</taxon>
        <taxon>Papillomaviridae</taxon>
        <taxon>Firstpapillomavirinae</taxon>
        <taxon>Alphapapillomavirus</taxon>
        <taxon>Alphapapillomavirus 8</taxon>
    </lineage>
</organism>
<evidence type="ECO:0000255" key="1">
    <source>
        <dbReference type="HAMAP-Rule" id="MF_04001"/>
    </source>
</evidence>
<evidence type="ECO:0000256" key="2">
    <source>
        <dbReference type="SAM" id="MobiDB-lite"/>
    </source>
</evidence>
<accession>P36779</accession>
<protein>
    <recommendedName>
        <fullName evidence="1">Regulatory protein E2</fullName>
    </recommendedName>
</protein>
<proteinExistence type="inferred from homology"/>
<dbReference type="EMBL" id="X74463">
    <property type="protein sequence ID" value="CAA52479.1"/>
    <property type="molecule type" value="Genomic_DNA"/>
</dbReference>
<dbReference type="PIR" id="S36587">
    <property type="entry name" value="S36587"/>
</dbReference>
<dbReference type="RefSeq" id="NP_041857.1">
    <property type="nucleotide sequence ID" value="NC_001595.1"/>
</dbReference>
<dbReference type="SMR" id="P36779"/>
<dbReference type="GeneID" id="1489471"/>
<dbReference type="KEGG" id="vg:1489471"/>
<dbReference type="OrthoDB" id="15886at10239"/>
<dbReference type="Proteomes" id="UP000008226">
    <property type="component" value="Genome"/>
</dbReference>
<dbReference type="GO" id="GO:0042025">
    <property type="term" value="C:host cell nucleus"/>
    <property type="evidence" value="ECO:0007669"/>
    <property type="project" value="UniProtKB-SubCell"/>
</dbReference>
<dbReference type="GO" id="GO:0003677">
    <property type="term" value="F:DNA binding"/>
    <property type="evidence" value="ECO:0007669"/>
    <property type="project" value="UniProtKB-UniRule"/>
</dbReference>
<dbReference type="GO" id="GO:0003700">
    <property type="term" value="F:DNA-binding transcription factor activity"/>
    <property type="evidence" value="ECO:0007669"/>
    <property type="project" value="UniProtKB-UniRule"/>
</dbReference>
<dbReference type="GO" id="GO:0000166">
    <property type="term" value="F:nucleotide binding"/>
    <property type="evidence" value="ECO:0007669"/>
    <property type="project" value="UniProtKB-UniRule"/>
</dbReference>
<dbReference type="GO" id="GO:0006260">
    <property type="term" value="P:DNA replication"/>
    <property type="evidence" value="ECO:0007669"/>
    <property type="project" value="UniProtKB-KW"/>
</dbReference>
<dbReference type="GO" id="GO:0006351">
    <property type="term" value="P:DNA-templated transcription"/>
    <property type="evidence" value="ECO:0007669"/>
    <property type="project" value="UniProtKB-UniRule"/>
</dbReference>
<dbReference type="GO" id="GO:0006275">
    <property type="term" value="P:regulation of DNA replication"/>
    <property type="evidence" value="ECO:0007669"/>
    <property type="project" value="UniProtKB-UniRule"/>
</dbReference>
<dbReference type="GO" id="GO:0039693">
    <property type="term" value="P:viral DNA genome replication"/>
    <property type="evidence" value="ECO:0007669"/>
    <property type="project" value="UniProtKB-UniRule"/>
</dbReference>
<dbReference type="Gene3D" id="3.30.70.330">
    <property type="match status" value="1"/>
</dbReference>
<dbReference type="Gene3D" id="1.10.287.30">
    <property type="entry name" value="E2 (early) protein, N terminal domain, subdomain 1"/>
    <property type="match status" value="1"/>
</dbReference>
<dbReference type="Gene3D" id="2.170.200.10">
    <property type="entry name" value="Papillomavirus E2 early protein domain"/>
    <property type="match status" value="1"/>
</dbReference>
<dbReference type="HAMAP" id="MF_04001">
    <property type="entry name" value="PPV_E2"/>
    <property type="match status" value="1"/>
</dbReference>
<dbReference type="InterPro" id="IPR035975">
    <property type="entry name" value="E2/EBNA1_C_sf"/>
</dbReference>
<dbReference type="InterPro" id="IPR012677">
    <property type="entry name" value="Nucleotide-bd_a/b_plait_sf"/>
</dbReference>
<dbReference type="InterPro" id="IPR000427">
    <property type="entry name" value="Papillomavirus_E2_C"/>
</dbReference>
<dbReference type="InterPro" id="IPR001866">
    <property type="entry name" value="PPV_E2_N"/>
</dbReference>
<dbReference type="InterPro" id="IPR033668">
    <property type="entry name" value="Reg_prot_E2"/>
</dbReference>
<dbReference type="InterPro" id="IPR036050">
    <property type="entry name" value="Regulatory_protein_E2_N"/>
</dbReference>
<dbReference type="InterPro" id="IPR042503">
    <property type="entry name" value="Regulatory_protein_E2_N_1"/>
</dbReference>
<dbReference type="InterPro" id="IPR042504">
    <property type="entry name" value="Regulatory_protein_E2_N_2"/>
</dbReference>
<dbReference type="Pfam" id="PF00511">
    <property type="entry name" value="PPV_E2_C"/>
    <property type="match status" value="1"/>
</dbReference>
<dbReference type="Pfam" id="PF00508">
    <property type="entry name" value="PPV_E2_N"/>
    <property type="match status" value="1"/>
</dbReference>
<dbReference type="SUPFAM" id="SSF51332">
    <property type="entry name" value="E2 regulatory, transactivation domain"/>
    <property type="match status" value="1"/>
</dbReference>
<dbReference type="SUPFAM" id="SSF54957">
    <property type="entry name" value="Viral DNA-binding domain"/>
    <property type="match status" value="1"/>
</dbReference>
<feature type="chain" id="PRO_0000133186" description="Regulatory protein E2">
    <location>
        <begin position="1"/>
        <end position="375"/>
    </location>
</feature>
<feature type="region of interest" description="Transactivation domain" evidence="1">
    <location>
        <begin position="1"/>
        <end position="200"/>
    </location>
</feature>
<feature type="region of interest" description="Disordered" evidence="2">
    <location>
        <begin position="235"/>
        <end position="293"/>
    </location>
</feature>
<feature type="region of interest" description="DNA-binding domain" evidence="1">
    <location>
        <begin position="294"/>
        <end position="375"/>
    </location>
</feature>
<name>VE2_HPV07</name>